<gene>
    <name evidence="1" type="primary">gpmB</name>
    <name type="ordered locus">ECS88_5078</name>
</gene>
<organism>
    <name type="scientific">Escherichia coli O45:K1 (strain S88 / ExPEC)</name>
    <dbReference type="NCBI Taxonomy" id="585035"/>
    <lineage>
        <taxon>Bacteria</taxon>
        <taxon>Pseudomonadati</taxon>
        <taxon>Pseudomonadota</taxon>
        <taxon>Gammaproteobacteria</taxon>
        <taxon>Enterobacterales</taxon>
        <taxon>Enterobacteriaceae</taxon>
        <taxon>Escherichia</taxon>
    </lineage>
</organism>
<reference key="1">
    <citation type="journal article" date="2009" name="PLoS Genet.">
        <title>Organised genome dynamics in the Escherichia coli species results in highly diverse adaptive paths.</title>
        <authorList>
            <person name="Touchon M."/>
            <person name="Hoede C."/>
            <person name="Tenaillon O."/>
            <person name="Barbe V."/>
            <person name="Baeriswyl S."/>
            <person name="Bidet P."/>
            <person name="Bingen E."/>
            <person name="Bonacorsi S."/>
            <person name="Bouchier C."/>
            <person name="Bouvet O."/>
            <person name="Calteau A."/>
            <person name="Chiapello H."/>
            <person name="Clermont O."/>
            <person name="Cruveiller S."/>
            <person name="Danchin A."/>
            <person name="Diard M."/>
            <person name="Dossat C."/>
            <person name="Karoui M.E."/>
            <person name="Frapy E."/>
            <person name="Garry L."/>
            <person name="Ghigo J.M."/>
            <person name="Gilles A.M."/>
            <person name="Johnson J."/>
            <person name="Le Bouguenec C."/>
            <person name="Lescat M."/>
            <person name="Mangenot S."/>
            <person name="Martinez-Jehanne V."/>
            <person name="Matic I."/>
            <person name="Nassif X."/>
            <person name="Oztas S."/>
            <person name="Petit M.A."/>
            <person name="Pichon C."/>
            <person name="Rouy Z."/>
            <person name="Ruf C.S."/>
            <person name="Schneider D."/>
            <person name="Tourret J."/>
            <person name="Vacherie B."/>
            <person name="Vallenet D."/>
            <person name="Medigue C."/>
            <person name="Rocha E.P.C."/>
            <person name="Denamur E."/>
        </authorList>
    </citation>
    <scope>NUCLEOTIDE SEQUENCE [LARGE SCALE GENOMIC DNA]</scope>
    <source>
        <strain>S88 / ExPEC</strain>
    </source>
</reference>
<proteinExistence type="inferred from homology"/>
<name>GPMB_ECO45</name>
<sequence length="215" mass="24015">MLQVYLVRHGETQWNAERRIQGQSDSPLTAKGEQQAMQVATRAKELGITHIISSDLGRTRRTAEIIAQACGCDIIFDSRLRELNMGVLETRNIDSLTEEEENWRRQLVNGTVDGRIPEGESMQELSDRVNAALESCRDLPQGSRPLLVSHGIALGCLVSTILGLPAWAERRLRLRNCSISRVDYQESLWLASGWVVETAGDISHLDAPALDELQR</sequence>
<protein>
    <recommendedName>
        <fullName evidence="1">Probable phosphoglycerate mutase GpmB</fullName>
        <ecNumber evidence="1">5.4.2.-</ecNumber>
    </recommendedName>
    <alternativeName>
        <fullName evidence="1">PGAM</fullName>
    </alternativeName>
    <alternativeName>
        <fullName evidence="1">Phosphoglyceromutase</fullName>
    </alternativeName>
</protein>
<dbReference type="EC" id="5.4.2.-" evidence="1"/>
<dbReference type="EMBL" id="CU928161">
    <property type="protein sequence ID" value="CAR06217.1"/>
    <property type="molecule type" value="Genomic_DNA"/>
</dbReference>
<dbReference type="RefSeq" id="WP_000942350.1">
    <property type="nucleotide sequence ID" value="NC_011742.1"/>
</dbReference>
<dbReference type="SMR" id="B7MNK4"/>
<dbReference type="KEGG" id="ecz:ECS88_5078"/>
<dbReference type="HOGENOM" id="CLU_033323_9_5_6"/>
<dbReference type="UniPathway" id="UPA00109">
    <property type="reaction ID" value="UER00186"/>
</dbReference>
<dbReference type="Proteomes" id="UP000000747">
    <property type="component" value="Chromosome"/>
</dbReference>
<dbReference type="GO" id="GO:0005737">
    <property type="term" value="C:cytoplasm"/>
    <property type="evidence" value="ECO:0007669"/>
    <property type="project" value="TreeGrafter"/>
</dbReference>
<dbReference type="GO" id="GO:0016791">
    <property type="term" value="F:phosphatase activity"/>
    <property type="evidence" value="ECO:0007669"/>
    <property type="project" value="TreeGrafter"/>
</dbReference>
<dbReference type="GO" id="GO:0004619">
    <property type="term" value="F:phosphoglycerate mutase activity"/>
    <property type="evidence" value="ECO:0007669"/>
    <property type="project" value="UniProtKB-UniRule"/>
</dbReference>
<dbReference type="GO" id="GO:0006096">
    <property type="term" value="P:glycolytic process"/>
    <property type="evidence" value="ECO:0007669"/>
    <property type="project" value="UniProtKB-UniRule"/>
</dbReference>
<dbReference type="CDD" id="cd07067">
    <property type="entry name" value="HP_PGM_like"/>
    <property type="match status" value="1"/>
</dbReference>
<dbReference type="Gene3D" id="3.40.50.1240">
    <property type="entry name" value="Phosphoglycerate mutase-like"/>
    <property type="match status" value="1"/>
</dbReference>
<dbReference type="HAMAP" id="MF_01040">
    <property type="entry name" value="PGAM_GpmB"/>
    <property type="match status" value="1"/>
</dbReference>
<dbReference type="InterPro" id="IPR013078">
    <property type="entry name" value="His_Pase_superF_clade-1"/>
</dbReference>
<dbReference type="InterPro" id="IPR029033">
    <property type="entry name" value="His_PPase_superfam"/>
</dbReference>
<dbReference type="InterPro" id="IPR001345">
    <property type="entry name" value="PG/BPGM_mutase_AS"/>
</dbReference>
<dbReference type="InterPro" id="IPR050275">
    <property type="entry name" value="PGM_Phosphatase"/>
</dbReference>
<dbReference type="InterPro" id="IPR023086">
    <property type="entry name" value="Phosphoglycerate_mutase_GpmB"/>
</dbReference>
<dbReference type="NCBIfam" id="NF002901">
    <property type="entry name" value="PRK03482.1"/>
    <property type="match status" value="1"/>
</dbReference>
<dbReference type="PANTHER" id="PTHR48100">
    <property type="entry name" value="BROAD-SPECIFICITY PHOSPHATASE YOR283W-RELATED"/>
    <property type="match status" value="1"/>
</dbReference>
<dbReference type="PANTHER" id="PTHR48100:SF1">
    <property type="entry name" value="HISTIDINE PHOSPHATASE FAMILY PROTEIN-RELATED"/>
    <property type="match status" value="1"/>
</dbReference>
<dbReference type="Pfam" id="PF00300">
    <property type="entry name" value="His_Phos_1"/>
    <property type="match status" value="1"/>
</dbReference>
<dbReference type="SMART" id="SM00855">
    <property type="entry name" value="PGAM"/>
    <property type="match status" value="1"/>
</dbReference>
<dbReference type="SUPFAM" id="SSF53254">
    <property type="entry name" value="Phosphoglycerate mutase-like"/>
    <property type="match status" value="1"/>
</dbReference>
<dbReference type="PROSITE" id="PS00175">
    <property type="entry name" value="PG_MUTASE"/>
    <property type="match status" value="1"/>
</dbReference>
<evidence type="ECO:0000255" key="1">
    <source>
        <dbReference type="HAMAP-Rule" id="MF_01040"/>
    </source>
</evidence>
<accession>B7MNK4</accession>
<feature type="chain" id="PRO_1000135999" description="Probable phosphoglycerate mutase GpmB">
    <location>
        <begin position="1"/>
        <end position="215"/>
    </location>
</feature>
<feature type="active site" description="Tele-phosphohistidine intermediate" evidence="1">
    <location>
        <position position="9"/>
    </location>
</feature>
<feature type="active site" description="Proton donor/acceptor" evidence="1">
    <location>
        <position position="82"/>
    </location>
</feature>
<feature type="binding site" evidence="1">
    <location>
        <begin position="8"/>
        <end position="15"/>
    </location>
    <ligand>
        <name>substrate</name>
    </ligand>
</feature>
<feature type="binding site" evidence="1">
    <location>
        <begin position="21"/>
        <end position="22"/>
    </location>
    <ligand>
        <name>substrate</name>
    </ligand>
</feature>
<feature type="binding site" evidence="1">
    <location>
        <position position="58"/>
    </location>
    <ligand>
        <name>substrate</name>
    </ligand>
</feature>
<feature type="binding site" evidence="1">
    <location>
        <position position="60"/>
    </location>
    <ligand>
        <name>substrate</name>
    </ligand>
</feature>
<feature type="binding site" evidence="1">
    <location>
        <begin position="82"/>
        <end position="85"/>
    </location>
    <ligand>
        <name>substrate</name>
    </ligand>
</feature>
<feature type="binding site" evidence="1">
    <location>
        <begin position="104"/>
        <end position="105"/>
    </location>
    <ligand>
        <name>substrate</name>
    </ligand>
</feature>
<feature type="binding site" evidence="1">
    <location>
        <begin position="151"/>
        <end position="152"/>
    </location>
    <ligand>
        <name>substrate</name>
    </ligand>
</feature>
<feature type="site" description="Transition state stabilizer" evidence="1">
    <location>
        <position position="150"/>
    </location>
</feature>
<comment type="catalytic activity">
    <reaction evidence="1">
        <text>(2R)-2-phosphoglycerate = (2R)-3-phosphoglycerate</text>
        <dbReference type="Rhea" id="RHEA:15901"/>
        <dbReference type="ChEBI" id="CHEBI:58272"/>
        <dbReference type="ChEBI" id="CHEBI:58289"/>
    </reaction>
</comment>
<comment type="pathway">
    <text evidence="1">Carbohydrate degradation; glycolysis; pyruvate from D-glyceraldehyde 3-phosphate: step 3/5.</text>
</comment>
<comment type="similarity">
    <text evidence="1">Belongs to the phosphoglycerate mutase family. GpmB subfamily.</text>
</comment>
<keyword id="KW-0324">Glycolysis</keyword>
<keyword id="KW-0413">Isomerase</keyword>
<keyword id="KW-1185">Reference proteome</keyword>